<name>KIJDR_ACTKI</name>
<organism>
    <name type="scientific">Actinomadura kijaniata</name>
    <dbReference type="NCBI Taxonomy" id="46161"/>
    <lineage>
        <taxon>Bacteria</taxon>
        <taxon>Bacillati</taxon>
        <taxon>Actinomycetota</taxon>
        <taxon>Actinomycetes</taxon>
        <taxon>Streptosporangiales</taxon>
        <taxon>Thermomonosporaceae</taxon>
        <taxon>Actinomadura</taxon>
    </lineage>
</organism>
<feature type="chain" id="PRO_0000444242" description="dTDP-3,4-didehydro-2,6-dideoxy-alpha-D-glucose 3-reductase">
    <location>
        <begin position="1"/>
        <end position="332"/>
    </location>
</feature>
<feature type="active site" description="Proton donor" evidence="1 6 7 8 9 10 11">
    <location>
        <position position="102"/>
    </location>
</feature>
<feature type="binding site" evidence="1 6 7 8 9 10 11">
    <location>
        <begin position="17"/>
        <end position="23"/>
    </location>
    <ligand>
        <name>NADP(+)</name>
        <dbReference type="ChEBI" id="CHEBI:58349"/>
    </ligand>
</feature>
<feature type="binding site" evidence="4 7 8 9 10 11">
    <location>
        <position position="24"/>
    </location>
    <ligand>
        <name>substrate</name>
    </ligand>
</feature>
<feature type="binding site" evidence="1 6 7 8 9 10 11">
    <location>
        <begin position="42"/>
        <end position="43"/>
    </location>
    <ligand>
        <name>NADP(+)</name>
        <dbReference type="ChEBI" id="CHEBI:58349"/>
    </ligand>
</feature>
<feature type="binding site" evidence="1 6 7 8 9 10 11">
    <location>
        <position position="63"/>
    </location>
    <ligand>
        <name>NADP(+)</name>
        <dbReference type="ChEBI" id="CHEBI:58349"/>
    </ligand>
</feature>
<feature type="binding site" evidence="1 6 7 8 9 11">
    <location>
        <position position="79"/>
    </location>
    <ligand>
        <name>NADP(+)</name>
        <dbReference type="ChEBI" id="CHEBI:58349"/>
    </ligand>
</feature>
<feature type="binding site" evidence="1 6 7 8 9 11">
    <location>
        <position position="84"/>
    </location>
    <ligand>
        <name>NADP(+)</name>
        <dbReference type="ChEBI" id="CHEBI:58349"/>
    </ligand>
</feature>
<feature type="binding site" evidence="1 7 9">
    <location>
        <position position="170"/>
    </location>
    <ligand>
        <name>NADP(+)</name>
        <dbReference type="ChEBI" id="CHEBI:58349"/>
    </ligand>
</feature>
<feature type="binding site" evidence="1 6 7 8 9 10 11">
    <location>
        <position position="182"/>
    </location>
    <ligand>
        <name>NADP(+)</name>
        <dbReference type="ChEBI" id="CHEBI:58349"/>
    </ligand>
</feature>
<feature type="binding site" evidence="4 7 8 9 10 11">
    <location>
        <position position="240"/>
    </location>
    <ligand>
        <name>substrate</name>
    </ligand>
</feature>
<feature type="binding site" evidence="4 7 8 9 10 11">
    <location>
        <position position="260"/>
    </location>
    <ligand>
        <name>substrate</name>
    </ligand>
</feature>
<feature type="mutagenesis site" description="Loss of reductase activity." evidence="1">
    <original>K</original>
    <variation>A</variation>
    <variation>M</variation>
    <variation>Q</variation>
    <location>
        <position position="102"/>
    </location>
</feature>
<feature type="mutagenesis site" description="Retains some activity, but the catalytic efficiency is strongly reduced." evidence="1">
    <original>K</original>
    <variation>E</variation>
    <location>
        <position position="102"/>
    </location>
</feature>
<feature type="mutagenesis site" description="Same affinity for dTDP-glucose and NADPH compared to the wild-type. Small reduction of the catalytic efficiency resulting from the conformational flexibility of the nicotinamide ring." evidence="1">
    <original>Y</original>
    <variation>F</variation>
    <location>
        <position position="186"/>
    </location>
</feature>
<feature type="strand" evidence="12">
    <location>
        <begin position="10"/>
        <end position="16"/>
    </location>
</feature>
<feature type="helix" evidence="12">
    <location>
        <begin position="19"/>
        <end position="23"/>
    </location>
</feature>
<feature type="helix" evidence="12">
    <location>
        <begin position="25"/>
        <end position="31"/>
    </location>
</feature>
<feature type="strand" evidence="12">
    <location>
        <begin position="35"/>
        <end position="44"/>
    </location>
</feature>
<feature type="helix" evidence="12">
    <location>
        <begin position="45"/>
        <end position="55"/>
    </location>
</feature>
<feature type="strand" evidence="12">
    <location>
        <begin position="57"/>
        <end position="62"/>
    </location>
</feature>
<feature type="helix" evidence="12">
    <location>
        <begin position="63"/>
        <end position="67"/>
    </location>
</feature>
<feature type="strand" evidence="12">
    <location>
        <begin position="73"/>
        <end position="77"/>
    </location>
</feature>
<feature type="helix" evidence="12">
    <location>
        <begin position="81"/>
        <end position="83"/>
    </location>
</feature>
<feature type="helix" evidence="12">
    <location>
        <begin position="84"/>
        <end position="93"/>
    </location>
</feature>
<feature type="strand" evidence="12">
    <location>
        <begin position="97"/>
        <end position="104"/>
    </location>
</feature>
<feature type="helix" evidence="12">
    <location>
        <begin position="108"/>
        <end position="120"/>
    </location>
</feature>
<feature type="strand" evidence="12">
    <location>
        <begin position="125"/>
        <end position="128"/>
    </location>
</feature>
<feature type="helix" evidence="12">
    <location>
        <begin position="130"/>
        <end position="133"/>
    </location>
</feature>
<feature type="helix" evidence="12">
    <location>
        <begin position="136"/>
        <end position="145"/>
    </location>
</feature>
<feature type="turn" evidence="12">
    <location>
        <begin position="146"/>
        <end position="149"/>
    </location>
</feature>
<feature type="strand" evidence="12">
    <location>
        <begin position="151"/>
        <end position="160"/>
    </location>
</feature>
<feature type="helix" evidence="12">
    <location>
        <begin position="169"/>
        <end position="171"/>
    </location>
</feature>
<feature type="turn" evidence="12">
    <location>
        <begin position="173"/>
        <end position="176"/>
    </location>
</feature>
<feature type="helix" evidence="12">
    <location>
        <begin position="178"/>
        <end position="182"/>
    </location>
</feature>
<feature type="helix" evidence="12">
    <location>
        <begin position="185"/>
        <end position="195"/>
    </location>
</feature>
<feature type="strand" evidence="12">
    <location>
        <begin position="200"/>
        <end position="209"/>
    </location>
</feature>
<feature type="turn" evidence="12">
    <location>
        <begin position="210"/>
        <end position="213"/>
    </location>
</feature>
<feature type="strand" evidence="12">
    <location>
        <begin position="214"/>
        <end position="223"/>
    </location>
</feature>
<feature type="strand" evidence="12">
    <location>
        <begin position="229"/>
        <end position="238"/>
    </location>
</feature>
<feature type="strand" evidence="12">
    <location>
        <begin position="241"/>
        <end position="250"/>
    </location>
</feature>
<feature type="strand" evidence="12">
    <location>
        <begin position="252"/>
        <end position="257"/>
    </location>
</feature>
<feature type="strand" evidence="12">
    <location>
        <begin position="268"/>
        <end position="273"/>
    </location>
</feature>
<feature type="strand" evidence="12">
    <location>
        <begin position="276"/>
        <end position="281"/>
    </location>
</feature>
<feature type="helix" evidence="12">
    <location>
        <begin position="287"/>
        <end position="301"/>
    </location>
</feature>
<feature type="helix" evidence="12">
    <location>
        <begin position="306"/>
        <end position="325"/>
    </location>
</feature>
<feature type="strand" evidence="12">
    <location>
        <begin position="326"/>
        <end position="331"/>
    </location>
</feature>
<proteinExistence type="evidence at protein level"/>
<dbReference type="EC" id="1.1.1.384" evidence="1"/>
<dbReference type="EMBL" id="EU301739">
    <property type="protein sequence ID" value="ACB46498.1"/>
    <property type="molecule type" value="Genomic_DNA"/>
</dbReference>
<dbReference type="PDB" id="3RBV">
    <property type="method" value="X-ray"/>
    <property type="resolution" value="1.90 A"/>
    <property type="chains" value="A=1-332"/>
</dbReference>
<dbReference type="PDB" id="3RC1">
    <property type="method" value="X-ray"/>
    <property type="resolution" value="1.71 A"/>
    <property type="chains" value="A=1-332"/>
</dbReference>
<dbReference type="PDB" id="3RC2">
    <property type="method" value="X-ray"/>
    <property type="resolution" value="1.80 A"/>
    <property type="chains" value="A=1-332"/>
</dbReference>
<dbReference type="PDB" id="3RC7">
    <property type="method" value="X-ray"/>
    <property type="resolution" value="2.00 A"/>
    <property type="chains" value="A=1-332"/>
</dbReference>
<dbReference type="PDB" id="3RC9">
    <property type="method" value="X-ray"/>
    <property type="resolution" value="1.91 A"/>
    <property type="chains" value="A=1-332"/>
</dbReference>
<dbReference type="PDB" id="3RCB">
    <property type="method" value="X-ray"/>
    <property type="resolution" value="2.49 A"/>
    <property type="chains" value="A=1-332"/>
</dbReference>
<dbReference type="PDBsum" id="3RBV"/>
<dbReference type="PDBsum" id="3RC1"/>
<dbReference type="PDBsum" id="3RC2"/>
<dbReference type="PDBsum" id="3RC7"/>
<dbReference type="PDBsum" id="3RC9"/>
<dbReference type="PDBsum" id="3RCB"/>
<dbReference type="SMR" id="B3TMR8"/>
<dbReference type="BRENDA" id="1.1.1.384">
    <property type="organism ID" value="13770"/>
</dbReference>
<dbReference type="EvolutionaryTrace" id="B3TMR8"/>
<dbReference type="GO" id="GO:0000166">
    <property type="term" value="F:nucleotide binding"/>
    <property type="evidence" value="ECO:0007669"/>
    <property type="project" value="InterPro"/>
</dbReference>
<dbReference type="GO" id="GO:0016491">
    <property type="term" value="F:oxidoreductase activity"/>
    <property type="evidence" value="ECO:0007669"/>
    <property type="project" value="UniProtKB-KW"/>
</dbReference>
<dbReference type="GO" id="GO:0017000">
    <property type="term" value="P:antibiotic biosynthetic process"/>
    <property type="evidence" value="ECO:0007669"/>
    <property type="project" value="UniProtKB-KW"/>
</dbReference>
<dbReference type="Gene3D" id="3.30.360.10">
    <property type="entry name" value="Dihydrodipicolinate Reductase, domain 2"/>
    <property type="match status" value="1"/>
</dbReference>
<dbReference type="Gene3D" id="3.40.50.720">
    <property type="entry name" value="NAD(P)-binding Rossmann-like Domain"/>
    <property type="match status" value="1"/>
</dbReference>
<dbReference type="InterPro" id="IPR000683">
    <property type="entry name" value="Gfo/Idh/MocA-like_OxRdtase_N"/>
</dbReference>
<dbReference type="InterPro" id="IPR050984">
    <property type="entry name" value="Gfo/Idh/MocA_domain"/>
</dbReference>
<dbReference type="InterPro" id="IPR055170">
    <property type="entry name" value="GFO_IDH_MocA-like_dom"/>
</dbReference>
<dbReference type="InterPro" id="IPR036291">
    <property type="entry name" value="NAD(P)-bd_dom_sf"/>
</dbReference>
<dbReference type="PANTHER" id="PTHR22604">
    <property type="entry name" value="OXIDOREDUCTASES"/>
    <property type="match status" value="1"/>
</dbReference>
<dbReference type="PANTHER" id="PTHR22604:SF105">
    <property type="entry name" value="TRANS-1,2-DIHYDROBENZENE-1,2-DIOL DEHYDROGENASE"/>
    <property type="match status" value="1"/>
</dbReference>
<dbReference type="Pfam" id="PF01408">
    <property type="entry name" value="GFO_IDH_MocA"/>
    <property type="match status" value="1"/>
</dbReference>
<dbReference type="Pfam" id="PF22725">
    <property type="entry name" value="GFO_IDH_MocA_C3"/>
    <property type="match status" value="1"/>
</dbReference>
<dbReference type="SUPFAM" id="SSF55347">
    <property type="entry name" value="Glyceraldehyde-3-phosphate dehydrogenase-like, C-terminal domain"/>
    <property type="match status" value="1"/>
</dbReference>
<dbReference type="SUPFAM" id="SSF51735">
    <property type="entry name" value="NAD(P)-binding Rossmann-fold domains"/>
    <property type="match status" value="1"/>
</dbReference>
<accession>B3TMR8</accession>
<protein>
    <recommendedName>
        <fullName evidence="2">dTDP-3,4-didehydro-2,6-dideoxy-alpha-D-glucose 3-reductase</fullName>
        <ecNumber evidence="1">1.1.1.384</ecNumber>
    </recommendedName>
    <alternativeName>
        <fullName evidence="2">3-ketoreductase</fullName>
    </alternativeName>
    <alternativeName>
        <fullName evidence="2">NADPH-dependent C3-ketoreductase</fullName>
    </alternativeName>
</protein>
<evidence type="ECO:0000269" key="1">
    <source>
    </source>
</evidence>
<evidence type="ECO:0000303" key="2">
    <source>
    </source>
</evidence>
<evidence type="ECO:0000305" key="3"/>
<evidence type="ECO:0000305" key="4">
    <source>
    </source>
</evidence>
<evidence type="ECO:0000312" key="5">
    <source>
        <dbReference type="EMBL" id="ACB46498.1"/>
    </source>
</evidence>
<evidence type="ECO:0007744" key="6">
    <source>
        <dbReference type="PDB" id="3RBV"/>
    </source>
</evidence>
<evidence type="ECO:0007744" key="7">
    <source>
        <dbReference type="PDB" id="3RC1"/>
    </source>
</evidence>
<evidence type="ECO:0007744" key="8">
    <source>
        <dbReference type="PDB" id="3RC2"/>
    </source>
</evidence>
<evidence type="ECO:0007744" key="9">
    <source>
        <dbReference type="PDB" id="3RC7"/>
    </source>
</evidence>
<evidence type="ECO:0007744" key="10">
    <source>
        <dbReference type="PDB" id="3RC9"/>
    </source>
</evidence>
<evidence type="ECO:0007744" key="11">
    <source>
        <dbReference type="PDB" id="3RCB"/>
    </source>
</evidence>
<evidence type="ECO:0007829" key="12">
    <source>
        <dbReference type="PDB" id="3RC1"/>
    </source>
</evidence>
<gene>
    <name evidence="5" type="ORF">KijD10</name>
</gene>
<sequence>MENPANANPIRVGVIGCADIAWRRALPALEAEPLTEVTAIASRRWDRAKRFTERFGGEPVEGYPALLERDDVDAVYVPLPAVLHAEWIDRALRAGKHVLAEKPLTTDRPQAERLFAVARERGLLLMENFMFLHHPQHRQVADMLDEGVIGEIRSFAASFTIPPKPQGDIRYQADVGGGALLDIGVYPIRAAGLFLGADLEFVGAVLRHERDRDVVVGGNALLTTRQGVTAQLTFGMEHAYTNNYEFRGSTGRLWMNRVFTPPATYQPVVHIERQDHAEQFVLPAHDQFAKSIRAFAQAVLSGEHPREWSEDSLRQASLVDAVRTGARDIYFP</sequence>
<reference key="1">
    <citation type="journal article" date="2007" name="J. Am. Chem. Soc.">
        <title>Elucidation of the kijanimicin gene cluster: insights into the biosynthesis of spirotetronate antibiotics and nitrosugars.</title>
        <authorList>
            <person name="Zhang H."/>
            <person name="White-Phillip J.A."/>
            <person name="Melancon C.E."/>
            <person name="Kwon H.-J."/>
            <person name="Yu W.-L."/>
            <person name="Liu H.-W."/>
        </authorList>
    </citation>
    <scope>NUCLEOTIDE SEQUENCE [GENOMIC DNA]</scope>
</reference>
<reference key="2">
    <citation type="journal article" date="2011" name="Biochemistry">
        <title>Combined structural and functional investigation of a C-3''-ketoreductase involved in the biosynthesis of dTDP-L-digitoxose.</title>
        <authorList>
            <person name="Kubiak R.L."/>
            <person name="Holden H.M."/>
        </authorList>
    </citation>
    <scope>X-RAY CRYSTALLOGRAPHY (1.71 ANGSTROMS) OF WILD TYPE AND MUTANTS IN COMPLEX WITH NADP AND SUBSTRATE ANALOG</scope>
    <scope>FUNCTION</scope>
    <scope>CATALYTIC ACTIVITY</scope>
    <scope>BIOPHYSICOCHEMICAL PROPERTIES</scope>
    <scope>MUTAGENESIS OF LYS-102 AND TYR-186</scope>
    <scope>ACTIVE SITE</scope>
    <scope>PATHWAY</scope>
    <scope>SUBUNIT</scope>
    <scope>SUBSTRATE SPECIFICITY</scope>
</reference>
<comment type="function">
    <text evidence="1">Involved in the biosynthesis of L-digitoxose, an unusual dideoxysugar attached to various pharmacologically active natural products, including the antitumor antibiotic tetrocarcin A, and the antibiotics kijanimicin and jadomycin B. Catalyzes the reduction of the C-3 keto moiety of dTDP-3,4-diketo-2,6-dideoxy-alpha-D-glucose to yield dTDP-4-keto-2,6-dideoxy-alpha-D-glucose. Also able to reduce dTDP-3-keto-6-deoxy-D-galactose and dTDP-3-keto-6-deoxy-D-glucose to yield dTDP-fucose and dTDP-quinovose, respectively.</text>
</comment>
<comment type="catalytic activity">
    <reaction evidence="1">
        <text>dTDP-4-dehydro-2,6-dideoxy-alpha-D-glucose + NADP(+) = dTDP-3,4-didehydro-2,6-dideoxy-alpha-D-glucose + NADPH + H(+)</text>
        <dbReference type="Rhea" id="RHEA:44624"/>
        <dbReference type="ChEBI" id="CHEBI:15378"/>
        <dbReference type="ChEBI" id="CHEBI:57783"/>
        <dbReference type="ChEBI" id="CHEBI:58349"/>
        <dbReference type="ChEBI" id="CHEBI:84537"/>
        <dbReference type="ChEBI" id="CHEBI:84540"/>
        <dbReference type="EC" id="1.1.1.384"/>
    </reaction>
</comment>
<comment type="biophysicochemical properties">
    <kinetics>
        <KM evidence="1">116.4 uM for dTDP-glucose</KM>
        <KM evidence="1">6.31 mM for NADPH</KM>
        <Vmax evidence="1">0.01 mmol/min/mg enzyme</Vmax>
        <text evidence="1">kcat is 6.24 sec(-1) for dTDP-glucose as substrate.</text>
    </kinetics>
</comment>
<comment type="pathway">
    <text evidence="4">Antibiotic biosynthesis.</text>
</comment>
<comment type="subunit">
    <text evidence="1">Homotetramer; dimer of dimers.</text>
</comment>
<comment type="similarity">
    <text evidence="3">Belongs to the Gfo/Idh/MocA family.</text>
</comment>
<keyword id="KW-0002">3D-structure</keyword>
<keyword id="KW-0045">Antibiotic biosynthesis</keyword>
<keyword id="KW-0521">NADP</keyword>
<keyword id="KW-0560">Oxidoreductase</keyword>